<protein>
    <recommendedName>
        <fullName>Alpha-2-HS-glycoprotein</fullName>
    </recommendedName>
    <alternativeName>
        <fullName>59 kDa bone sialic acid-containing protein</fullName>
        <shortName>BSP</shortName>
    </alternativeName>
    <alternativeName>
        <fullName>Fetuin-A</fullName>
    </alternativeName>
    <alternativeName>
        <fullName>Glycoprotein PP63</fullName>
    </alternativeName>
</protein>
<accession>P24090</accession>
<accession>Q5BKD2</accession>
<gene>
    <name type="primary">Ahsg</name>
    <name type="synonym">Fetua</name>
</gene>
<organism>
    <name type="scientific">Rattus norvegicus</name>
    <name type="common">Rat</name>
    <dbReference type="NCBI Taxonomy" id="10116"/>
    <lineage>
        <taxon>Eukaryota</taxon>
        <taxon>Metazoa</taxon>
        <taxon>Chordata</taxon>
        <taxon>Craniata</taxon>
        <taxon>Vertebrata</taxon>
        <taxon>Euteleostomi</taxon>
        <taxon>Mammalia</taxon>
        <taxon>Eutheria</taxon>
        <taxon>Euarchontoglires</taxon>
        <taxon>Glires</taxon>
        <taxon>Rodentia</taxon>
        <taxon>Myomorpha</taxon>
        <taxon>Muroidea</taxon>
        <taxon>Muridae</taxon>
        <taxon>Murinae</taxon>
        <taxon>Rattus</taxon>
    </lineage>
</organism>
<sequence>MKSLVLLLCFAQLWSCQSAPQGAGLGFRELACDDPETEHVALIAVDYLNKHLLQGFRQILNQIDKVKVWSRRPFGEVYELEIDTLETTCHALDPTPLANCSVRQQAEHAVEGDCDFHILKQDGQFRVLHAQCHSTPDSAEDVRKFCPRCPILIRFNDTNVVHTVKTALAAFNAQNNGTYFKLVEISRAQNVPFPVSTLVEFVIAATDCTGQEVTDPAKCNLLAEKQYGFCKATLIHRLGGEEVSVACKLFQTQPQPANANPAGPAPTVGQAAPVAPPAGPPESVVVGPVAVPLGLPDHRTHHDLRHAFSPVASVESASGEVLHSPKVGQPGDAGAAGPVAPLCPGRVRYFKI</sequence>
<evidence type="ECO:0000250" key="1">
    <source>
        <dbReference type="UniProtKB" id="P02765"/>
    </source>
</evidence>
<evidence type="ECO:0000250" key="2">
    <source>
        <dbReference type="UniProtKB" id="P29699"/>
    </source>
</evidence>
<evidence type="ECO:0000255" key="3"/>
<evidence type="ECO:0000255" key="4">
    <source>
        <dbReference type="PROSITE-ProRule" id="PRU00861"/>
    </source>
</evidence>
<evidence type="ECO:0000256" key="5">
    <source>
        <dbReference type="SAM" id="MobiDB-lite"/>
    </source>
</evidence>
<evidence type="ECO:0000269" key="6">
    <source>
    </source>
</evidence>
<evidence type="ECO:0000305" key="7"/>
<evidence type="ECO:0007744" key="8">
    <source>
    </source>
</evidence>
<evidence type="ECO:0007744" key="9">
    <source>
    </source>
</evidence>
<keyword id="KW-0903">Direct protein sequencing</keyword>
<keyword id="KW-1015">Disulfide bond</keyword>
<keyword id="KW-0325">Glycoprotein</keyword>
<keyword id="KW-0597">Phosphoprotein</keyword>
<keyword id="KW-1185">Reference proteome</keyword>
<keyword id="KW-0677">Repeat</keyword>
<keyword id="KW-0964">Secreted</keyword>
<keyword id="KW-0732">Signal</keyword>
<dbReference type="EMBL" id="X63446">
    <property type="protein sequence ID" value="CAA45042.1"/>
    <property type="molecule type" value="mRNA"/>
</dbReference>
<dbReference type="EMBL" id="M29758">
    <property type="protein sequence ID" value="AAA75502.1"/>
    <property type="molecule type" value="mRNA"/>
</dbReference>
<dbReference type="EMBL" id="D10261">
    <property type="protein sequence ID" value="BAA01101.1"/>
    <property type="molecule type" value="mRNA"/>
</dbReference>
<dbReference type="EMBL" id="BC091118">
    <property type="protein sequence ID" value="AAH91118.1"/>
    <property type="molecule type" value="mRNA"/>
</dbReference>
<dbReference type="PIR" id="A32827">
    <property type="entry name" value="A32827"/>
</dbReference>
<dbReference type="RefSeq" id="NP_037030.2">
    <property type="nucleotide sequence ID" value="NM_012898.6"/>
</dbReference>
<dbReference type="SMR" id="P24090"/>
<dbReference type="BioGRID" id="247412">
    <property type="interactions" value="1"/>
</dbReference>
<dbReference type="FunCoup" id="P24090">
    <property type="interactions" value="226"/>
</dbReference>
<dbReference type="IntAct" id="P24090">
    <property type="interactions" value="2"/>
</dbReference>
<dbReference type="STRING" id="10116.ENSRNOP00000073898"/>
<dbReference type="MEROPS" id="I25.020"/>
<dbReference type="MEROPS" id="I25.021"/>
<dbReference type="GlyCosmos" id="P24090">
    <property type="glycosylation" value="3 sites, No reported glycans"/>
</dbReference>
<dbReference type="GlyGen" id="P24090">
    <property type="glycosylation" value="4 sites, 1 N-linked glycan (1 site)"/>
</dbReference>
<dbReference type="iPTMnet" id="P24090"/>
<dbReference type="PhosphoSitePlus" id="P24090"/>
<dbReference type="SwissPalm" id="P24090"/>
<dbReference type="PaxDb" id="10116-ENSRNOP00000055223"/>
<dbReference type="Ensembl" id="ENSRNOT00000058422.5">
    <property type="protein sequence ID" value="ENSRNOP00000055223.5"/>
    <property type="gene ID" value="ENSRNOG00000038370.5"/>
</dbReference>
<dbReference type="GeneID" id="25373"/>
<dbReference type="KEGG" id="rno:25373"/>
<dbReference type="UCSC" id="RGD:2075">
    <property type="organism name" value="rat"/>
</dbReference>
<dbReference type="AGR" id="RGD:2075"/>
<dbReference type="CTD" id="197"/>
<dbReference type="RGD" id="2075">
    <property type="gene designation" value="Ahsg"/>
</dbReference>
<dbReference type="eggNOG" id="ENOG502RYRI">
    <property type="taxonomic scope" value="Eukaryota"/>
</dbReference>
<dbReference type="GeneTree" id="ENSGT00950000182930"/>
<dbReference type="InParanoid" id="P24090"/>
<dbReference type="Reactome" id="R-RNO-114608">
    <property type="pathway name" value="Platelet degranulation"/>
</dbReference>
<dbReference type="Reactome" id="R-RNO-381426">
    <property type="pathway name" value="Regulation of Insulin-like Growth Factor (IGF) transport and uptake by Insulin-like Growth Factor Binding Proteins (IGFBPs)"/>
</dbReference>
<dbReference type="Reactome" id="R-RNO-6798695">
    <property type="pathway name" value="Neutrophil degranulation"/>
</dbReference>
<dbReference type="Reactome" id="R-RNO-8957275">
    <property type="pathway name" value="Post-translational protein phosphorylation"/>
</dbReference>
<dbReference type="PRO" id="PR:P24090"/>
<dbReference type="Proteomes" id="UP000002494">
    <property type="component" value="Chromosome 11"/>
</dbReference>
<dbReference type="GO" id="GO:0031012">
    <property type="term" value="C:extracellular matrix"/>
    <property type="evidence" value="ECO:0000318"/>
    <property type="project" value="GO_Central"/>
</dbReference>
<dbReference type="GO" id="GO:0005576">
    <property type="term" value="C:extracellular region"/>
    <property type="evidence" value="ECO:0000318"/>
    <property type="project" value="GO_Central"/>
</dbReference>
<dbReference type="GO" id="GO:0005615">
    <property type="term" value="C:extracellular space"/>
    <property type="evidence" value="ECO:0000314"/>
    <property type="project" value="RGD"/>
</dbReference>
<dbReference type="GO" id="GO:0032991">
    <property type="term" value="C:protein-containing complex"/>
    <property type="evidence" value="ECO:0000314"/>
    <property type="project" value="RGD"/>
</dbReference>
<dbReference type="GO" id="GO:0004869">
    <property type="term" value="F:cysteine-type endopeptidase inhibitor activity"/>
    <property type="evidence" value="ECO:0007669"/>
    <property type="project" value="InterPro"/>
</dbReference>
<dbReference type="GO" id="GO:0004866">
    <property type="term" value="F:endopeptidase inhibitor activity"/>
    <property type="evidence" value="ECO:0000318"/>
    <property type="project" value="GO_Central"/>
</dbReference>
<dbReference type="GO" id="GO:0019210">
    <property type="term" value="F:kinase inhibitor activity"/>
    <property type="evidence" value="ECO:0000303"/>
    <property type="project" value="UniProtKB"/>
</dbReference>
<dbReference type="GO" id="GO:0030294">
    <property type="term" value="F:receptor signaling protein tyrosine kinase inhibitor activity"/>
    <property type="evidence" value="ECO:0000314"/>
    <property type="project" value="RGD"/>
</dbReference>
<dbReference type="GO" id="GO:0006953">
    <property type="term" value="P:acute-phase response"/>
    <property type="evidence" value="ECO:0000250"/>
    <property type="project" value="UniProtKB"/>
</dbReference>
<dbReference type="GO" id="GO:0031100">
    <property type="term" value="P:animal organ regeneration"/>
    <property type="evidence" value="ECO:0000270"/>
    <property type="project" value="RGD"/>
</dbReference>
<dbReference type="GO" id="GO:0032869">
    <property type="term" value="P:cellular response to insulin stimulus"/>
    <property type="evidence" value="ECO:0000270"/>
    <property type="project" value="RGD"/>
</dbReference>
<dbReference type="GO" id="GO:0021987">
    <property type="term" value="P:cerebral cortex development"/>
    <property type="evidence" value="ECO:0000270"/>
    <property type="project" value="RGD"/>
</dbReference>
<dbReference type="GO" id="GO:0008584">
    <property type="term" value="P:male gonad development"/>
    <property type="evidence" value="ECO:0000315"/>
    <property type="project" value="RGD"/>
</dbReference>
<dbReference type="GO" id="GO:0030502">
    <property type="term" value="P:negative regulation of bone mineralization"/>
    <property type="evidence" value="ECO:0000315"/>
    <property type="project" value="RGD"/>
</dbReference>
<dbReference type="GO" id="GO:0030308">
    <property type="term" value="P:negative regulation of cell growth"/>
    <property type="evidence" value="ECO:0000314"/>
    <property type="project" value="RGD"/>
</dbReference>
<dbReference type="GO" id="GO:0046627">
    <property type="term" value="P:negative regulation of insulin receptor signaling pathway"/>
    <property type="evidence" value="ECO:0000314"/>
    <property type="project" value="RGD"/>
</dbReference>
<dbReference type="GO" id="GO:0001503">
    <property type="term" value="P:ossification"/>
    <property type="evidence" value="ECO:0000266"/>
    <property type="project" value="RGD"/>
</dbReference>
<dbReference type="GO" id="GO:0045780">
    <property type="term" value="P:positive regulation of bone resorption"/>
    <property type="evidence" value="ECO:0000315"/>
    <property type="project" value="RGD"/>
</dbReference>
<dbReference type="GO" id="GO:0050766">
    <property type="term" value="P:positive regulation of phagocytosis"/>
    <property type="evidence" value="ECO:0000250"/>
    <property type="project" value="UniProtKB"/>
</dbReference>
<dbReference type="GO" id="GO:0065003">
    <property type="term" value="P:protein-containing complex assembly"/>
    <property type="evidence" value="ECO:0000353"/>
    <property type="project" value="RGD"/>
</dbReference>
<dbReference type="GO" id="GO:0050727">
    <property type="term" value="P:regulation of inflammatory response"/>
    <property type="evidence" value="ECO:0000250"/>
    <property type="project" value="UniProtKB"/>
</dbReference>
<dbReference type="CDD" id="cd00042">
    <property type="entry name" value="CY"/>
    <property type="match status" value="2"/>
</dbReference>
<dbReference type="FunFam" id="3.10.450.10:FF:000010">
    <property type="entry name" value="Alpha-2-HS-glycoprotein"/>
    <property type="match status" value="1"/>
</dbReference>
<dbReference type="FunFam" id="3.10.450.10:FF:000009">
    <property type="entry name" value="Alpha-2-HS-glycoprotein 2"/>
    <property type="match status" value="1"/>
</dbReference>
<dbReference type="Gene3D" id="3.10.450.10">
    <property type="match status" value="2"/>
</dbReference>
<dbReference type="InterPro" id="IPR000010">
    <property type="entry name" value="Cystatin_dom"/>
</dbReference>
<dbReference type="InterPro" id="IPR025760">
    <property type="entry name" value="Cystatin_Fetuin_A"/>
</dbReference>
<dbReference type="InterPro" id="IPR046350">
    <property type="entry name" value="Cystatin_sf"/>
</dbReference>
<dbReference type="InterPro" id="IPR050735">
    <property type="entry name" value="Kininogen_Fetuin_HRG"/>
</dbReference>
<dbReference type="InterPro" id="IPR001363">
    <property type="entry name" value="Prot_inh_fetuin_CS"/>
</dbReference>
<dbReference type="PANTHER" id="PTHR13814:SF6">
    <property type="entry name" value="ALPHA-2-HS-GLYCOPROTEIN"/>
    <property type="match status" value="1"/>
</dbReference>
<dbReference type="PANTHER" id="PTHR13814">
    <property type="entry name" value="FETUIN"/>
    <property type="match status" value="1"/>
</dbReference>
<dbReference type="Pfam" id="PF00031">
    <property type="entry name" value="Cystatin"/>
    <property type="match status" value="1"/>
</dbReference>
<dbReference type="SMART" id="SM00043">
    <property type="entry name" value="CY"/>
    <property type="match status" value="2"/>
</dbReference>
<dbReference type="SUPFAM" id="SSF54403">
    <property type="entry name" value="Cystatin/monellin"/>
    <property type="match status" value="2"/>
</dbReference>
<dbReference type="PROSITE" id="PS51529">
    <property type="entry name" value="CYSTATIN_FETUIN_A"/>
    <property type="match status" value="2"/>
</dbReference>
<dbReference type="PROSITE" id="PS01254">
    <property type="entry name" value="FETUIN_1"/>
    <property type="match status" value="1"/>
</dbReference>
<dbReference type="PROSITE" id="PS01255">
    <property type="entry name" value="FETUIN_2"/>
    <property type="match status" value="1"/>
</dbReference>
<feature type="signal peptide" evidence="6">
    <location>
        <begin position="1"/>
        <end position="18"/>
    </location>
</feature>
<feature type="chain" id="PRO_0000008897" description="Alpha-2-HS-glycoprotein">
    <location>
        <begin position="19"/>
        <end position="352"/>
    </location>
</feature>
<feature type="domain" description="Cystatin fetuin-A-type 1" evidence="4">
    <location>
        <begin position="19"/>
        <end position="133"/>
    </location>
</feature>
<feature type="domain" description="Cystatin fetuin-A-type 2" evidence="4">
    <location>
        <begin position="144"/>
        <end position="250"/>
    </location>
</feature>
<feature type="region of interest" description="Disordered" evidence="5">
    <location>
        <begin position="256"/>
        <end position="280"/>
    </location>
</feature>
<feature type="region of interest" description="Disordered" evidence="5">
    <location>
        <begin position="319"/>
        <end position="338"/>
    </location>
</feature>
<feature type="compositionally biased region" description="Low complexity" evidence="5">
    <location>
        <begin position="256"/>
        <end position="273"/>
    </location>
</feature>
<feature type="compositionally biased region" description="Low complexity" evidence="5">
    <location>
        <begin position="328"/>
        <end position="338"/>
    </location>
</feature>
<feature type="site" description="Cleavage; by trypsin" evidence="3">
    <location>
        <begin position="143"/>
        <end position="144"/>
    </location>
</feature>
<feature type="modified residue" description="Phosphoserine" evidence="1">
    <location>
        <position position="134"/>
    </location>
</feature>
<feature type="modified residue" description="Phosphothreonine" evidence="2">
    <location>
        <position position="135"/>
    </location>
</feature>
<feature type="modified residue" description="Phosphoserine" evidence="8 9">
    <location>
        <position position="138"/>
    </location>
</feature>
<feature type="modified residue" description="Phosphoserine" evidence="9">
    <location>
        <position position="309"/>
    </location>
</feature>
<feature type="modified residue" description="Phosphoserine" evidence="9">
    <location>
        <position position="313"/>
    </location>
</feature>
<feature type="modified residue" description="Phosphoserine" evidence="9">
    <location>
        <position position="316"/>
    </location>
</feature>
<feature type="modified residue" description="Phosphoserine" evidence="9">
    <location>
        <position position="318"/>
    </location>
</feature>
<feature type="glycosylation site" description="N-linked (GlcNAc...) asparagine" evidence="3">
    <location>
        <position position="99"/>
    </location>
</feature>
<feature type="glycosylation site" description="N-linked (GlcNAc...) asparagine" evidence="3">
    <location>
        <position position="156"/>
    </location>
</feature>
<feature type="glycosylation site" description="N-linked (GlcNAc...) asparagine" evidence="3">
    <location>
        <position position="176"/>
    </location>
</feature>
<feature type="disulfide bond" evidence="4">
    <location>
        <begin position="32"/>
        <end position="343"/>
    </location>
</feature>
<feature type="disulfide bond" evidence="4">
    <location>
        <begin position="89"/>
        <end position="100"/>
    </location>
</feature>
<feature type="disulfide bond" evidence="4">
    <location>
        <begin position="114"/>
        <end position="132"/>
    </location>
</feature>
<feature type="disulfide bond" evidence="4">
    <location>
        <begin position="146"/>
        <end position="149"/>
    </location>
</feature>
<feature type="disulfide bond" evidence="4">
    <location>
        <begin position="208"/>
        <end position="219"/>
    </location>
</feature>
<feature type="disulfide bond" evidence="4">
    <location>
        <begin position="230"/>
        <end position="247"/>
    </location>
</feature>
<feature type="sequence conflict" description="In Ref. 6; AA sequence." evidence="7" ref="6">
    <original>Q</original>
    <variation>E</variation>
    <location>
        <position position="21"/>
    </location>
</feature>
<feature type="sequence conflict" description="In Ref. 6; AA sequence." evidence="7" ref="6">
    <original>E</original>
    <variation>Q</variation>
    <location>
        <position position="29"/>
    </location>
</feature>
<feature type="sequence conflict" description="In Ref. 6; AA sequence." evidence="7" ref="6">
    <original>DD</original>
    <variation>NN</variation>
    <location>
        <begin position="33"/>
        <end position="34"/>
    </location>
</feature>
<feature type="sequence conflict" description="In Ref. 3; AAA75502." evidence="7" ref="3">
    <original>D</original>
    <variation>H</variation>
    <location>
        <position position="46"/>
    </location>
</feature>
<feature type="sequence conflict" description="In Ref. 3; AAA75502." evidence="7" ref="3">
    <original>E</original>
    <variation>Q</variation>
    <location>
        <position position="76"/>
    </location>
</feature>
<feature type="sequence conflict" description="In Ref. 6; AA sequence." evidence="7" ref="6">
    <original>HR</original>
    <variation>QF</variation>
    <location>
        <begin position="236"/>
        <end position="237"/>
    </location>
</feature>
<feature type="sequence conflict" description="In Ref. 6; AA sequence." evidence="7" ref="6">
    <original>EE</original>
    <variation>QQ</variation>
    <location>
        <begin position="241"/>
        <end position="242"/>
    </location>
</feature>
<feature type="sequence conflict" description="In Ref. 6; AA sequence." evidence="7" ref="6">
    <original>Q</original>
    <variation>E</variation>
    <location>
        <position position="329"/>
    </location>
</feature>
<name>FETUA_RAT</name>
<reference key="1">
    <citation type="journal article" date="1992" name="Eur. J. Biochem.">
        <title>The nucleotide and partial amino acid sequences of rat fetuin. Identity with the natural tyrosine kinase inhibitor of the rat insulin receptor.</title>
        <authorList>
            <person name="Rauth G."/>
            <person name="Poeschke O."/>
            <person name="Fink E."/>
            <person name="Eulitz M."/>
            <person name="Tippmer S."/>
            <person name="Kellerer M."/>
            <person name="Haering H."/>
            <person name="Nawratil P."/>
            <person name="Haasemann M."/>
            <person name="Jahnen-Dechent W."/>
            <person name="Mueller-Esterl W."/>
        </authorList>
    </citation>
    <scope>NUCLEOTIDE SEQUENCE [MRNA]</scope>
</reference>
<reference key="2">
    <citation type="journal article" date="1989" name="Cell">
        <title>Characterization of a natural inhibitor of the insulin receptor tyrosine kinase: cDNA cloning, purification, and anti-mitogenic activity.</title>
        <authorList>
            <person name="Auberger P."/>
            <person name="Falquerho L."/>
            <person name="Contreres J.O."/>
            <person name="Pages G."/>
            <person name="le Cam G."/>
            <person name="Rossi B."/>
            <person name="le Cam A."/>
        </authorList>
    </citation>
    <scope>NUCLEOTIDE SEQUENCE [MRNA]</scope>
    <source>
        <tissue>Liver</tissue>
    </source>
</reference>
<reference key="3">
    <citation type="journal article" date="1991" name="Gene">
        <title>Primary structure of the rat gene encoding an inhibitor of the insulin receptor tyrosine kinase.</title>
        <authorList>
            <person name="Falquerho L."/>
            <person name="Patey G."/>
            <person name="Paqureau L."/>
            <person name="Rossi V."/>
            <person name="Lahuna O."/>
            <person name="Szpirer J."/>
            <person name="Szpirer C."/>
            <person name="Levan G."/>
            <person name="le Cam A."/>
        </authorList>
    </citation>
    <scope>NUCLEOTIDE SEQUENCE [MRNA]</scope>
    <scope>SEQUENCE REVISION</scope>
</reference>
<reference key="4">
    <citation type="journal article" date="1993" name="J. Bone Miner. Res.">
        <title>Molecular cloning and sequence analysis of cDNA for a 59 kD bone sialoprotein of the rat: demonstration that it is a counterpart of human alpha 2-HS glycoprotein and bovine fetuin.</title>
        <authorList>
            <person name="Ohnishi T."/>
            <person name="Nakamura O."/>
            <person name="Ozawa M."/>
            <person name="Arakaki N."/>
            <person name="Muramatsu T."/>
            <person name="Daikuhara Y."/>
        </authorList>
    </citation>
    <scope>NUCLEOTIDE SEQUENCE [MRNA]</scope>
</reference>
<reference key="5">
    <citation type="journal article" date="2004" name="Genome Res.">
        <title>The status, quality, and expansion of the NIH full-length cDNA project: the Mammalian Gene Collection (MGC).</title>
        <authorList>
            <consortium name="The MGC Project Team"/>
        </authorList>
    </citation>
    <scope>NUCLEOTIDE SEQUENCE [LARGE SCALE MRNA]</scope>
    <source>
        <tissue>Spleen</tissue>
    </source>
</reference>
<reference key="6">
    <citation type="journal article" date="1991" name="J. Biol. Chem.">
        <title>Purification, characterization, and studies on biosynthesis of a 59-kDa bone sialic acid-containing protein (BSP) from rat mandible using a monoclonal antibody. Evidence that 59-kDa BSP may be the rat counterpart of human alpha 2-HS glycoprotein and is synthesized by both hepatocytes and osteoblasts.</title>
        <authorList>
            <person name="Ohnishi T."/>
            <person name="Arakaki N."/>
            <person name="Nakamura O."/>
            <person name="Hirono S."/>
            <person name="Daikuhara Y."/>
        </authorList>
    </citation>
    <scope>PROTEIN SEQUENCE OF 19-35; 51-64; 165-180; 231-247 AND 327-348</scope>
    <source>
        <tissue>Mandible</tissue>
    </source>
</reference>
<reference key="7">
    <citation type="journal article" date="1991" name="Biochem. J.">
        <title>Rat tyrosine kinase inhibitor shows sequence similarity to human alpha 2-HS glycoprotein and bovine fetuin.</title>
        <authorList>
            <person name="Haasemann M."/>
            <person name="Nawratil P."/>
            <person name="Mueller-Esterl W."/>
        </authorList>
    </citation>
    <scope>IDENTITY OF PP63 WITH FETUIN</scope>
</reference>
<reference key="8">
    <citation type="journal article" date="1992" name="Cell">
        <title>The rat protein encoded by clone pp63 is a fetuin/alpha 2-HS glycoprotein-like molecule, but is it the tyrosine kinase inhibitor pp63?</title>
        <authorList>
            <person name="Brown W.M."/>
            <person name="Christie D.L."/>
            <person name="Dziegielewska K.M."/>
            <person name="Saunders N.R."/>
            <person name="Yang F."/>
        </authorList>
    </citation>
    <scope>IDENTITY OF PP63 WITH FETUIN</scope>
</reference>
<reference key="9">
    <citation type="journal article" date="2006" name="Proc. Natl. Acad. Sci. U.S.A.">
        <title>Quantitative phosphoproteomics of vasopressin-sensitive renal cells: regulation of aquaporin-2 phosphorylation at two sites.</title>
        <authorList>
            <person name="Hoffert J.D."/>
            <person name="Pisitkun T."/>
            <person name="Wang G."/>
            <person name="Shen R.-F."/>
            <person name="Knepper M.A."/>
        </authorList>
    </citation>
    <scope>PHOSPHORYLATION [LARGE SCALE ANALYSIS] AT SER-138</scope>
    <scope>IDENTIFICATION BY MASS SPECTROMETRY [LARGE SCALE ANALYSIS]</scope>
</reference>
<reference key="10">
    <citation type="journal article" date="2012" name="Nat. Commun.">
        <title>Quantitative maps of protein phosphorylation sites across 14 different rat organs and tissues.</title>
        <authorList>
            <person name="Lundby A."/>
            <person name="Secher A."/>
            <person name="Lage K."/>
            <person name="Nordsborg N.B."/>
            <person name="Dmytriyev A."/>
            <person name="Lundby C."/>
            <person name="Olsen J.V."/>
        </authorList>
    </citation>
    <scope>PHOSPHORYLATION [LARGE SCALE ANALYSIS] AT SER-138; SER-309; SER-313; SER-316 AND SER-318</scope>
    <scope>IDENTIFICATION BY MASS SPECTROMETRY [LARGE SCALE ANALYSIS]</scope>
</reference>
<comment type="function">
    <text>Could inhibit both insulin-receptor tyrosine kinase activity and insulin-stimulated receptor autophosphorylation and, concomitantly, antagonize the mitogenic effect of the hormone in cultured rat hepatoma cells.</text>
</comment>
<comment type="subcellular location">
    <subcellularLocation>
        <location>Secreted</location>
    </subcellularLocation>
</comment>
<comment type="tissue specificity">
    <text>Synthesized in liver and secreted by the hepatocytes in the blood.</text>
</comment>
<comment type="PTM">
    <text>Undergoes complex post-translational modification involving N-glycosylation, and addition of fucose and sialic acid residues. Phosphorylation occurs at a serine residue.</text>
</comment>
<comment type="PTM">
    <text evidence="1">Phosphorylated by FAM20C in the extracellular medium.</text>
</comment>
<comment type="similarity">
    <text evidence="4">Belongs to the fetuin family.</text>
</comment>
<proteinExistence type="evidence at protein level"/>